<proteinExistence type="inferred from homology"/>
<name>BCSA_PSEFS</name>
<comment type="function">
    <text>Catalytic subunit of cellulose synthase. It polymerizes uridine 5'-diphosphate glucose to cellulose, which is produced as an extracellular component responsible for the structural integrity and rigidity of self-supporting mats characteristic of the 'wrinkly spreader' phenotype.</text>
</comment>
<comment type="catalytic activity">
    <reaction>
        <text>[(1-&gt;4)-beta-D-glucosyl](n) + UDP-alpha-D-glucose = [(1-&gt;4)-beta-D-glucosyl](n+1) + UDP + H(+)</text>
        <dbReference type="Rhea" id="RHEA:19929"/>
        <dbReference type="Rhea" id="RHEA-COMP:10033"/>
        <dbReference type="Rhea" id="RHEA-COMP:10034"/>
        <dbReference type="ChEBI" id="CHEBI:15378"/>
        <dbReference type="ChEBI" id="CHEBI:18246"/>
        <dbReference type="ChEBI" id="CHEBI:58223"/>
        <dbReference type="ChEBI" id="CHEBI:58885"/>
        <dbReference type="EC" id="2.4.1.12"/>
    </reaction>
</comment>
<comment type="cofactor">
    <cofactor evidence="1">
        <name>Mg(2+)</name>
        <dbReference type="ChEBI" id="CHEBI:18420"/>
    </cofactor>
</comment>
<comment type="activity regulation">
    <text evidence="1">Activated by bis-(3'-5') cyclic diguanylic acid (c-di-GMP).</text>
</comment>
<comment type="pathway">
    <text>Glycan metabolism; bacterial cellulose biosynthesis.</text>
</comment>
<comment type="subcellular location">
    <subcellularLocation>
        <location evidence="3">Cell inner membrane</location>
        <topology evidence="3">Multi-pass membrane protein</topology>
    </subcellularLocation>
</comment>
<comment type="domain">
    <text>There are two conserved domains in the globular part of the protein: the N-terminal domain (domain A) contains the conserved DXD motif and is possibly involved in catalysis and substrate binding. The C-terminal domain (domain B) contains the QXXRW motif and is present only in processive glycosyl transferases. It could be involved in the processivity function of the enzyme, possibly required for holding the growing glycan chain in the active site.</text>
</comment>
<comment type="similarity">
    <text evidence="3">Belongs to the glycosyltransferase 2 family.</text>
</comment>
<protein>
    <recommendedName>
        <fullName>Cellulose synthase catalytic subunit [UDP-forming]</fullName>
        <ecNumber>2.4.1.12</ecNumber>
    </recommendedName>
</protein>
<sequence>MTDTTSSTPFVEGRAEQRLNGAIARFNRWPSAPRTVLVVASCVLGAMLLLGIISAPLDLYSQCLFAAVCFLAVLVLRKIPGRLAILALVVLSLVASLRYMFWRLTSTLGFETWVDMFFGYGLVAAEFYALIVLIFGYVQTAWPLRRTPVWLKTEPEEWPTVDVFIPTYNEALSIVKLTIFAAQAMDWPKDKLRVHVLDDGRRDDFREFCRKVGVNYIRRDNNFHAKAGNLNEALKVTDGEYIALFDADHVPTRSFLQVSLGWFLKDPKLAMLQTPHFFFSPDPFEKNLDTFRAVPNEGELFYGLVQDGNDLWNATFFCGSCAVIRREPLLEIGGVAVETVTEDAHTALKLNRLGYNTAYLAIPQAAGLATESLSRHINQRIRWARGMAQIFRTDNPLLGKGLKWGQRICYANAMLHFFYGLPRLVFLTAPLAYLIFGAEIFHASALMIVAYVLPHLVHSSLTNSRIQGRFRHSFWNEVYETVLAWYILPPVLVALVNPKAGGFNVTDKGGIIDKQFFDWKLARPYLVLLAVNLIGLGFGIHQLIWGDASTAVTVAINLTWTLYNLIITSAAVAVASEARQVRSEPRVSAKLPVSIICADGRVLDGTTQDFSQNGFGLMLSDGHSITQGERVQLVLSRNGQDSLFDARVVFSKGAQIGAQFEALSLRQQSELVRLTFSRADTWAASWGAGQPDTPLAALREVGSIGIGGLFTLGRATLHELRLALSRTPTKPLDTLMDKP</sequence>
<dbReference type="EC" id="2.4.1.12"/>
<dbReference type="EMBL" id="AY074776">
    <property type="protein sequence ID" value="AAL71842.1"/>
    <property type="molecule type" value="Genomic_DNA"/>
</dbReference>
<dbReference type="EMBL" id="AM181176">
    <property type="protein sequence ID" value="CAY46578.1"/>
    <property type="molecule type" value="Genomic_DNA"/>
</dbReference>
<dbReference type="RefSeq" id="WP_012721722.1">
    <property type="nucleotide sequence ID" value="NC_012660.1"/>
</dbReference>
<dbReference type="SMR" id="P58931"/>
<dbReference type="CAZy" id="GT2">
    <property type="family name" value="Glycosyltransferase Family 2"/>
</dbReference>
<dbReference type="PATRIC" id="fig|216595.4.peg.534"/>
<dbReference type="eggNOG" id="COG1215">
    <property type="taxonomic scope" value="Bacteria"/>
</dbReference>
<dbReference type="HOGENOM" id="CLU_011907_5_0_6"/>
<dbReference type="OrthoDB" id="9806824at2"/>
<dbReference type="UniPathway" id="UPA00694"/>
<dbReference type="GO" id="GO:0005886">
    <property type="term" value="C:plasma membrane"/>
    <property type="evidence" value="ECO:0007669"/>
    <property type="project" value="UniProtKB-SubCell"/>
</dbReference>
<dbReference type="GO" id="GO:0016760">
    <property type="term" value="F:cellulose synthase (UDP-forming) activity"/>
    <property type="evidence" value="ECO:0007669"/>
    <property type="project" value="UniProtKB-EC"/>
</dbReference>
<dbReference type="GO" id="GO:0035438">
    <property type="term" value="F:cyclic-di-GMP binding"/>
    <property type="evidence" value="ECO:0007669"/>
    <property type="project" value="InterPro"/>
</dbReference>
<dbReference type="GO" id="GO:0030244">
    <property type="term" value="P:cellulose biosynthetic process"/>
    <property type="evidence" value="ECO:0007669"/>
    <property type="project" value="UniProtKB-KW"/>
</dbReference>
<dbReference type="GO" id="GO:0006011">
    <property type="term" value="P:UDP-alpha-D-glucose metabolic process"/>
    <property type="evidence" value="ECO:0007669"/>
    <property type="project" value="InterPro"/>
</dbReference>
<dbReference type="CDD" id="cd06421">
    <property type="entry name" value="CESA_CelA_like"/>
    <property type="match status" value="1"/>
</dbReference>
<dbReference type="Gene3D" id="2.40.10.220">
    <property type="entry name" value="predicted glycosyltransferase like domains"/>
    <property type="match status" value="1"/>
</dbReference>
<dbReference type="Gene3D" id="3.90.550.10">
    <property type="entry name" value="Spore Coat Polysaccharide Biosynthesis Protein SpsA, Chain A"/>
    <property type="match status" value="1"/>
</dbReference>
<dbReference type="InterPro" id="IPR003919">
    <property type="entry name" value="Cell_synth_A"/>
</dbReference>
<dbReference type="InterPro" id="IPR005150">
    <property type="entry name" value="Cellulose_synth"/>
</dbReference>
<dbReference type="InterPro" id="IPR001173">
    <property type="entry name" value="Glyco_trans_2-like"/>
</dbReference>
<dbReference type="InterPro" id="IPR050321">
    <property type="entry name" value="Glycosyltr_2/OpgH_subfam"/>
</dbReference>
<dbReference type="InterPro" id="IPR029044">
    <property type="entry name" value="Nucleotide-diphossugar_trans"/>
</dbReference>
<dbReference type="InterPro" id="IPR009875">
    <property type="entry name" value="PilZ_domain"/>
</dbReference>
<dbReference type="NCBIfam" id="TIGR03030">
    <property type="entry name" value="CelA"/>
    <property type="match status" value="1"/>
</dbReference>
<dbReference type="NCBIfam" id="NF008558">
    <property type="entry name" value="PRK11498.1"/>
    <property type="match status" value="1"/>
</dbReference>
<dbReference type="PANTHER" id="PTHR43867">
    <property type="entry name" value="CELLULOSE SYNTHASE CATALYTIC SUBUNIT A [UDP-FORMING]"/>
    <property type="match status" value="1"/>
</dbReference>
<dbReference type="PANTHER" id="PTHR43867:SF2">
    <property type="entry name" value="CELLULOSE SYNTHASE CATALYTIC SUBUNIT A [UDP-FORMING]"/>
    <property type="match status" value="1"/>
</dbReference>
<dbReference type="Pfam" id="PF03552">
    <property type="entry name" value="Cellulose_synt"/>
    <property type="match status" value="1"/>
</dbReference>
<dbReference type="Pfam" id="PF00535">
    <property type="entry name" value="Glycos_transf_2"/>
    <property type="match status" value="1"/>
</dbReference>
<dbReference type="Pfam" id="PF07238">
    <property type="entry name" value="PilZ"/>
    <property type="match status" value="1"/>
</dbReference>
<dbReference type="PRINTS" id="PR01439">
    <property type="entry name" value="CELLSNTHASEA"/>
</dbReference>
<dbReference type="SUPFAM" id="SSF53448">
    <property type="entry name" value="Nucleotide-diphospho-sugar transferases"/>
    <property type="match status" value="1"/>
</dbReference>
<dbReference type="SUPFAM" id="SSF141371">
    <property type="entry name" value="PilZ domain-like"/>
    <property type="match status" value="1"/>
</dbReference>
<accession>P58931</accession>
<accession>C3K5V4</accession>
<accession>Q8RSZ1</accession>
<reference key="1">
    <citation type="journal article" date="2002" name="Genetics">
        <title>Adaptive divergence in experimental populations of Pseudomonas fluorescens. I. Genetic and phenotypic bases of wrinkly spreader fitness.</title>
        <authorList>
            <person name="Spiers A.J."/>
            <person name="Kahn S.G."/>
            <person name="Bohannon J."/>
            <person name="Travisano M."/>
            <person name="Rainey P.B."/>
        </authorList>
    </citation>
    <scope>NUCLEOTIDE SEQUENCE [GENOMIC DNA]</scope>
</reference>
<reference key="2">
    <citation type="journal article" date="2009" name="Genome Biol.">
        <title>Genomic and genetic analyses of diversity and plant interactions of Pseudomonas fluorescens.</title>
        <authorList>
            <person name="Silby M.W."/>
            <person name="Cerdeno-Tarraga A.M."/>
            <person name="Vernikos G.S."/>
            <person name="Giddens S.R."/>
            <person name="Jackson R.W."/>
            <person name="Preston G.M."/>
            <person name="Zhang X.-X."/>
            <person name="Moon C.D."/>
            <person name="Gehrig S.M."/>
            <person name="Godfrey S.A.C."/>
            <person name="Knight C.G."/>
            <person name="Malone J.G."/>
            <person name="Robinson Z."/>
            <person name="Spiers A.J."/>
            <person name="Harris S."/>
            <person name="Challis G.L."/>
            <person name="Yaxley A.M."/>
            <person name="Harris D."/>
            <person name="Seeger K."/>
            <person name="Murphy L."/>
            <person name="Rutter S."/>
            <person name="Squares R."/>
            <person name="Quail M.A."/>
            <person name="Saunders E."/>
            <person name="Mavromatis K."/>
            <person name="Brettin T.S."/>
            <person name="Bentley S.D."/>
            <person name="Hothersall J."/>
            <person name="Stephens E."/>
            <person name="Thomas C.M."/>
            <person name="Parkhill J."/>
            <person name="Levy S.B."/>
            <person name="Rainey P.B."/>
            <person name="Thomson N.R."/>
        </authorList>
    </citation>
    <scope>NUCLEOTIDE SEQUENCE [LARGE SCALE GENOMIC DNA]</scope>
    <source>
        <strain>SBW25</strain>
    </source>
</reference>
<keyword id="KW-0973">c-di-GMP</keyword>
<keyword id="KW-0997">Cell inner membrane</keyword>
<keyword id="KW-1003">Cell membrane</keyword>
<keyword id="KW-0135">Cellulose biosynthesis</keyword>
<keyword id="KW-0328">Glycosyltransferase</keyword>
<keyword id="KW-0472">Membrane</keyword>
<keyword id="KW-0808">Transferase</keyword>
<keyword id="KW-0812">Transmembrane</keyword>
<keyword id="KW-1133">Transmembrane helix</keyword>
<organism>
    <name type="scientific">Pseudomonas fluorescens (strain SBW25)</name>
    <dbReference type="NCBI Taxonomy" id="216595"/>
    <lineage>
        <taxon>Bacteria</taxon>
        <taxon>Pseudomonadati</taxon>
        <taxon>Pseudomonadota</taxon>
        <taxon>Gammaproteobacteria</taxon>
        <taxon>Pseudomonadales</taxon>
        <taxon>Pseudomonadaceae</taxon>
        <taxon>Pseudomonas</taxon>
    </lineage>
</organism>
<gene>
    <name type="primary">bcsA</name>
    <name type="synonym">wssB</name>
    <name type="ordered locus">PFLU_0301</name>
</gene>
<feature type="chain" id="PRO_0000059271" description="Cellulose synthase catalytic subunit [UDP-forming]">
    <location>
        <begin position="1"/>
        <end position="739"/>
    </location>
</feature>
<feature type="transmembrane region" description="Helical" evidence="2">
    <location>
        <begin position="36"/>
        <end position="55"/>
    </location>
</feature>
<feature type="transmembrane region" description="Helical" evidence="2">
    <location>
        <begin position="59"/>
        <end position="76"/>
    </location>
</feature>
<feature type="transmembrane region" description="Helical" evidence="2">
    <location>
        <begin position="83"/>
        <end position="101"/>
    </location>
</feature>
<feature type="transmembrane region" description="Helical" evidence="2">
    <location>
        <begin position="116"/>
        <end position="138"/>
    </location>
</feature>
<feature type="transmembrane region" description="Helical" evidence="2">
    <location>
        <begin position="417"/>
        <end position="436"/>
    </location>
</feature>
<feature type="transmembrane region" description="Helical" evidence="2">
    <location>
        <begin position="440"/>
        <end position="462"/>
    </location>
</feature>
<feature type="transmembrane region" description="Helical" evidence="2">
    <location>
        <begin position="524"/>
        <end position="546"/>
    </location>
</feature>
<feature type="transmembrane region" description="Helical" evidence="2">
    <location>
        <begin position="551"/>
        <end position="573"/>
    </location>
</feature>
<feature type="domain" description="PilZ">
    <location>
        <begin position="580"/>
        <end position="677"/>
    </location>
</feature>
<feature type="region of interest" description="Catalytic subdomain A">
    <location>
        <begin position="157"/>
        <end position="250"/>
    </location>
</feature>
<feature type="region of interest" description="Catalytic subdomain B">
    <location>
        <begin position="327"/>
        <end position="387"/>
    </location>
</feature>
<feature type="active site" evidence="2">
    <location>
        <position position="199"/>
    </location>
</feature>
<feature type="active site" evidence="2">
    <location>
        <position position="343"/>
    </location>
</feature>
<feature type="binding site" evidence="2">
    <location>
        <position position="246"/>
    </location>
    <ligand>
        <name>substrate</name>
    </ligand>
</feature>
<feature type="binding site" evidence="2">
    <location>
        <position position="248"/>
    </location>
    <ligand>
        <name>substrate</name>
    </ligand>
</feature>
<feature type="sequence conflict" description="In Ref. 1; AAL71842." evidence="3" ref="1">
    <original>L</original>
    <variation>Q</variation>
    <location>
        <position position="415"/>
    </location>
</feature>
<feature type="sequence conflict" description="In Ref. 1; AAL71842." evidence="3" ref="1">
    <original>F</original>
    <variation>K</variation>
    <location>
        <position position="644"/>
    </location>
</feature>
<evidence type="ECO:0000250" key="1"/>
<evidence type="ECO:0000255" key="2"/>
<evidence type="ECO:0000305" key="3"/>